<gene>
    <name evidence="1" type="primary">nhaA</name>
    <name type="ordered locus">VFMJ11_0925</name>
</gene>
<keyword id="KW-0050">Antiport</keyword>
<keyword id="KW-0997">Cell inner membrane</keyword>
<keyword id="KW-1003">Cell membrane</keyword>
<keyword id="KW-0406">Ion transport</keyword>
<keyword id="KW-0472">Membrane</keyword>
<keyword id="KW-0915">Sodium</keyword>
<keyword id="KW-0739">Sodium transport</keyword>
<keyword id="KW-0812">Transmembrane</keyword>
<keyword id="KW-1133">Transmembrane helix</keyword>
<keyword id="KW-0813">Transport</keyword>
<comment type="function">
    <text evidence="1">Na(+)/H(+) antiporter that extrudes sodium in exchange for external protons.</text>
</comment>
<comment type="catalytic activity">
    <reaction evidence="1">
        <text>Na(+)(in) + 2 H(+)(out) = Na(+)(out) + 2 H(+)(in)</text>
        <dbReference type="Rhea" id="RHEA:29251"/>
        <dbReference type="ChEBI" id="CHEBI:15378"/>
        <dbReference type="ChEBI" id="CHEBI:29101"/>
    </reaction>
    <physiologicalReaction direction="left-to-right" evidence="1">
        <dbReference type="Rhea" id="RHEA:29252"/>
    </physiologicalReaction>
</comment>
<comment type="subcellular location">
    <subcellularLocation>
        <location evidence="1">Cell inner membrane</location>
        <topology evidence="1">Multi-pass membrane protein</topology>
    </subcellularLocation>
</comment>
<comment type="similarity">
    <text evidence="1">Belongs to the NhaA Na(+)/H(+) (TC 2.A.33) antiporter family.</text>
</comment>
<protein>
    <recommendedName>
        <fullName evidence="1">Na(+)/H(+) antiporter NhaA</fullName>
    </recommendedName>
    <alternativeName>
        <fullName evidence="1">Sodium/proton antiporter NhaA</fullName>
    </alternativeName>
</protein>
<name>NHAA_ALIFM</name>
<sequence length="382" mass="40250">MSDVIKNFFKLESAGGILLVIAAAIAMMIANSSLAPMYDTFLHSYIGGMSVSHWINDGLMAVFFLLIGLEVKRELLEGALKSKETAIFPAIAAVGGMLAPALVYVAFNMGDPEALSGWAIPAATDIAFALGIMALLGNRVPVSLKVFLLALAIIDDLGVVVIIAFFYTSDLSVLALVIGFVMTGLLFLLNAKHVTKIRWYLLVGFILWVSVLQSGVHATLAGVVLGFAIPLKGNKGERSPLKHMEHALHPYVAFAILPVFAFANAGISLEGVSLDSLTTTLPLGVALGLFLGKPLGIFSFSYLAVKSGVAKLPTGVNMKHIFAVSVLCGIGFTMSIFISSLAFGGVNPEFDKLARLGILMGSTFAAVVGYALLSISLPKKAA</sequence>
<dbReference type="EMBL" id="CP001139">
    <property type="protein sequence ID" value="ACH66698.1"/>
    <property type="molecule type" value="Genomic_DNA"/>
</dbReference>
<dbReference type="RefSeq" id="WP_011261552.1">
    <property type="nucleotide sequence ID" value="NC_011184.1"/>
</dbReference>
<dbReference type="SMR" id="B5FCI6"/>
<dbReference type="GeneID" id="54163555"/>
<dbReference type="KEGG" id="vfm:VFMJ11_0925"/>
<dbReference type="HOGENOM" id="CLU_015803_1_0_6"/>
<dbReference type="Proteomes" id="UP000001857">
    <property type="component" value="Chromosome I"/>
</dbReference>
<dbReference type="GO" id="GO:0005886">
    <property type="term" value="C:plasma membrane"/>
    <property type="evidence" value="ECO:0007669"/>
    <property type="project" value="UniProtKB-SubCell"/>
</dbReference>
<dbReference type="GO" id="GO:0015385">
    <property type="term" value="F:sodium:proton antiporter activity"/>
    <property type="evidence" value="ECO:0007669"/>
    <property type="project" value="TreeGrafter"/>
</dbReference>
<dbReference type="GO" id="GO:0006885">
    <property type="term" value="P:regulation of pH"/>
    <property type="evidence" value="ECO:0007669"/>
    <property type="project" value="InterPro"/>
</dbReference>
<dbReference type="Gene3D" id="1.20.1530.10">
    <property type="entry name" value="Na+/H+ antiporter like domain"/>
    <property type="match status" value="1"/>
</dbReference>
<dbReference type="HAMAP" id="MF_01844">
    <property type="entry name" value="NhaA"/>
    <property type="match status" value="1"/>
</dbReference>
<dbReference type="InterPro" id="IPR023171">
    <property type="entry name" value="Na/H_antiporter_dom_sf"/>
</dbReference>
<dbReference type="InterPro" id="IPR004670">
    <property type="entry name" value="NhaA"/>
</dbReference>
<dbReference type="NCBIfam" id="TIGR00773">
    <property type="entry name" value="NhaA"/>
    <property type="match status" value="1"/>
</dbReference>
<dbReference type="NCBIfam" id="NF007111">
    <property type="entry name" value="PRK09560.1"/>
    <property type="match status" value="1"/>
</dbReference>
<dbReference type="NCBIfam" id="NF007112">
    <property type="entry name" value="PRK09561.1"/>
    <property type="match status" value="1"/>
</dbReference>
<dbReference type="PANTHER" id="PTHR30341:SF0">
    <property type="entry name" value="NA(+)_H(+) ANTIPORTER NHAA"/>
    <property type="match status" value="1"/>
</dbReference>
<dbReference type="PANTHER" id="PTHR30341">
    <property type="entry name" value="SODIUM ION/PROTON ANTIPORTER NHAA-RELATED"/>
    <property type="match status" value="1"/>
</dbReference>
<dbReference type="Pfam" id="PF06965">
    <property type="entry name" value="Na_H_antiport_1"/>
    <property type="match status" value="1"/>
</dbReference>
<organism>
    <name type="scientific">Aliivibrio fischeri (strain MJ11)</name>
    <name type="common">Vibrio fischeri</name>
    <dbReference type="NCBI Taxonomy" id="388396"/>
    <lineage>
        <taxon>Bacteria</taxon>
        <taxon>Pseudomonadati</taxon>
        <taxon>Pseudomonadota</taxon>
        <taxon>Gammaproteobacteria</taxon>
        <taxon>Vibrionales</taxon>
        <taxon>Vibrionaceae</taxon>
        <taxon>Aliivibrio</taxon>
    </lineage>
</organism>
<reference key="1">
    <citation type="submission" date="2008-08" db="EMBL/GenBank/DDBJ databases">
        <title>Complete sequence of Vibrio fischeri strain MJ11.</title>
        <authorList>
            <person name="Mandel M.J."/>
            <person name="Stabb E.V."/>
            <person name="Ruby E.G."/>
            <person name="Ferriera S."/>
            <person name="Johnson J."/>
            <person name="Kravitz S."/>
            <person name="Beeson K."/>
            <person name="Sutton G."/>
            <person name="Rogers Y.-H."/>
            <person name="Friedman R."/>
            <person name="Frazier M."/>
            <person name="Venter J.C."/>
        </authorList>
    </citation>
    <scope>NUCLEOTIDE SEQUENCE [LARGE SCALE GENOMIC DNA]</scope>
    <source>
        <strain>MJ11</strain>
    </source>
</reference>
<proteinExistence type="inferred from homology"/>
<feature type="chain" id="PRO_1000188443" description="Na(+)/H(+) antiporter NhaA">
    <location>
        <begin position="1"/>
        <end position="382"/>
    </location>
</feature>
<feature type="transmembrane region" description="Helical" evidence="1">
    <location>
        <begin position="14"/>
        <end position="34"/>
    </location>
</feature>
<feature type="transmembrane region" description="Helical" evidence="1">
    <location>
        <begin position="49"/>
        <end position="69"/>
    </location>
</feature>
<feature type="transmembrane region" description="Helical" evidence="1">
    <location>
        <begin position="87"/>
        <end position="107"/>
    </location>
</feature>
<feature type="transmembrane region" description="Helical" evidence="1">
    <location>
        <begin position="117"/>
        <end position="137"/>
    </location>
</feature>
<feature type="transmembrane region" description="Helical" evidence="1">
    <location>
        <begin position="146"/>
        <end position="166"/>
    </location>
</feature>
<feature type="transmembrane region" description="Helical" evidence="1">
    <location>
        <begin position="171"/>
        <end position="191"/>
    </location>
</feature>
<feature type="transmembrane region" description="Helical" evidence="1">
    <location>
        <begin position="205"/>
        <end position="225"/>
    </location>
</feature>
<feature type="transmembrane region" description="Helical" evidence="1">
    <location>
        <begin position="252"/>
        <end position="272"/>
    </location>
</feature>
<feature type="transmembrane region" description="Helical" evidence="1">
    <location>
        <begin position="285"/>
        <end position="305"/>
    </location>
</feature>
<feature type="transmembrane region" description="Helical" evidence="1">
    <location>
        <begin position="321"/>
        <end position="341"/>
    </location>
</feature>
<feature type="transmembrane region" description="Helical" evidence="1">
    <location>
        <begin position="356"/>
        <end position="376"/>
    </location>
</feature>
<evidence type="ECO:0000255" key="1">
    <source>
        <dbReference type="HAMAP-Rule" id="MF_01844"/>
    </source>
</evidence>
<accession>B5FCI6</accession>